<dbReference type="EMBL" id="M61187">
    <property type="protein sequence ID" value="AAA48336.1"/>
    <property type="status" value="ALT_FRAME"/>
    <property type="molecule type" value="Genomic_DNA"/>
</dbReference>
<dbReference type="EMBL" id="D11079">
    <property type="protein sequence ID" value="BAA01813.1"/>
    <property type="status" value="ALT_FRAME"/>
    <property type="molecule type" value="Genomic_DNA"/>
</dbReference>
<dbReference type="EMBL" id="AY243312">
    <property type="protein sequence ID" value="AAO89444.1"/>
    <property type="molecule type" value="Genomic_DNA"/>
</dbReference>
<dbReference type="RefSeq" id="YP_233047.1">
    <property type="nucleotide sequence ID" value="NC_006998.1"/>
</dbReference>
<dbReference type="SMR" id="P24765"/>
<dbReference type="IntAct" id="P24765">
    <property type="interactions" value="1"/>
</dbReference>
<dbReference type="MINT" id="P24765"/>
<dbReference type="DNASU" id="3707695"/>
<dbReference type="GeneID" id="3707695"/>
<dbReference type="KEGG" id="vg:3707695"/>
<dbReference type="Proteomes" id="UP000000344">
    <property type="component" value="Genome"/>
</dbReference>
<dbReference type="GO" id="GO:0033644">
    <property type="term" value="C:host cell membrane"/>
    <property type="evidence" value="ECO:0007669"/>
    <property type="project" value="UniProtKB-SubCell"/>
</dbReference>
<dbReference type="GO" id="GO:0016020">
    <property type="term" value="C:membrane"/>
    <property type="evidence" value="ECO:0007669"/>
    <property type="project" value="UniProtKB-KW"/>
</dbReference>
<dbReference type="GO" id="GO:0030246">
    <property type="term" value="F:carbohydrate binding"/>
    <property type="evidence" value="ECO:0007669"/>
    <property type="project" value="UniProtKB-KW"/>
</dbReference>
<dbReference type="GO" id="GO:0045954">
    <property type="term" value="P:positive regulation of natural killer cell mediated cytotoxicity"/>
    <property type="evidence" value="ECO:0007669"/>
    <property type="project" value="TreeGrafter"/>
</dbReference>
<dbReference type="GO" id="GO:0002223">
    <property type="term" value="P:stimulatory C-type lectin receptor signaling pathway"/>
    <property type="evidence" value="ECO:0007669"/>
    <property type="project" value="TreeGrafter"/>
</dbReference>
<dbReference type="Gene3D" id="3.10.100.10">
    <property type="entry name" value="Mannose-Binding Protein A, subunit A"/>
    <property type="match status" value="1"/>
</dbReference>
<dbReference type="InterPro" id="IPR001304">
    <property type="entry name" value="C-type_lectin-like"/>
</dbReference>
<dbReference type="InterPro" id="IPR016186">
    <property type="entry name" value="C-type_lectin-like/link_sf"/>
</dbReference>
<dbReference type="InterPro" id="IPR016187">
    <property type="entry name" value="CTDL_fold"/>
</dbReference>
<dbReference type="InterPro" id="IPR050919">
    <property type="entry name" value="NKG2/CD94_NK_receptors"/>
</dbReference>
<dbReference type="PANTHER" id="PTHR22800">
    <property type="entry name" value="C-TYPE LECTIN PROTEINS"/>
    <property type="match status" value="1"/>
</dbReference>
<dbReference type="PANTHER" id="PTHR22800:SF252">
    <property type="entry name" value="NATURAL KILLER CELLS ANTIGEN CD94"/>
    <property type="match status" value="1"/>
</dbReference>
<dbReference type="Pfam" id="PF00059">
    <property type="entry name" value="Lectin_C"/>
    <property type="match status" value="1"/>
</dbReference>
<dbReference type="SMART" id="SM00034">
    <property type="entry name" value="CLECT"/>
    <property type="match status" value="1"/>
</dbReference>
<dbReference type="SUPFAM" id="SSF56436">
    <property type="entry name" value="C-type lectin-like"/>
    <property type="match status" value="1"/>
</dbReference>
<dbReference type="PROSITE" id="PS50041">
    <property type="entry name" value="C_TYPE_LECTIN_2"/>
    <property type="match status" value="1"/>
</dbReference>
<accession>P24765</accession>
<accession>Q76ZN7</accession>
<organismHost>
    <name type="scientific">Bos taurus</name>
    <name type="common">Bovine</name>
    <dbReference type="NCBI Taxonomy" id="9913"/>
</organismHost>
<name>A40_VACCW</name>
<gene>
    <name type="ordered locus">VACWR165</name>
    <name type="ORF">A40R</name>
</gene>
<protein>
    <recommendedName>
        <fullName>Protein A40</fullName>
    </recommendedName>
</protein>
<evidence type="ECO:0000255" key="1"/>
<evidence type="ECO:0000255" key="2">
    <source>
        <dbReference type="PROSITE-ProRule" id="PRU00040"/>
    </source>
</evidence>
<evidence type="ECO:0000305" key="3"/>
<evidence type="ECO:0000305" key="4">
    <source>
    </source>
</evidence>
<comment type="subcellular location">
    <subcellularLocation>
        <location evidence="4">Host membrane</location>
        <topology evidence="4">Single-pass type II membrane protein</topology>
    </subcellularLocation>
    <text>Not detected in virion membranes.</text>
</comment>
<comment type="similarity">
    <text evidence="3">Belongs to the poxviridae A40 protein family.</text>
</comment>
<comment type="sequence caution" evidence="3">
    <conflict type="frameshift">
        <sequence resource="EMBL-CDS" id="AAA48336"/>
    </conflict>
</comment>
<comment type="sequence caution" evidence="3">
    <conflict type="frameshift">
        <sequence resource="EMBL-CDS" id="BAA01813"/>
    </conflict>
</comment>
<keyword id="KW-0244">Early protein</keyword>
<keyword id="KW-1043">Host membrane</keyword>
<keyword id="KW-0430">Lectin</keyword>
<keyword id="KW-0472">Membrane</keyword>
<keyword id="KW-1185">Reference proteome</keyword>
<keyword id="KW-0735">Signal-anchor</keyword>
<keyword id="KW-0812">Transmembrane</keyword>
<keyword id="KW-1133">Transmembrane helix</keyword>
<feature type="chain" id="PRO_0000099330" description="Protein A40">
    <location>
        <begin position="1"/>
        <end position="159"/>
    </location>
</feature>
<feature type="topological domain" description="Cytoplasmic" evidence="1">
    <location>
        <begin position="1"/>
        <end position="9"/>
    </location>
</feature>
<feature type="transmembrane region" description="Helical; Signal-anchor for type II membrane protein" evidence="1">
    <location>
        <begin position="10"/>
        <end position="30"/>
    </location>
</feature>
<feature type="topological domain" description="Extracellular" evidence="1">
    <location>
        <begin position="31"/>
        <end position="159"/>
    </location>
</feature>
<feature type="domain" description="C-type lectin" evidence="2">
    <location>
        <begin position="63"/>
        <end position="159"/>
    </location>
</feature>
<sequence>MNKHKTDYAGYACCVICGLIVGIIFTATLLKVVERKLVHTPSIDKTIKDAYIREDCPTDWISYNNKCIHLSTDRKTWEEGRNACKALNPNSDLIKIETPNELSFLRSIRRGYWVGESEILNQTTPYNFIAKNATKNGTKKRKYICSTTNTPKLHSCYTI</sequence>
<organism>
    <name type="scientific">Vaccinia virus (strain Western Reserve)</name>
    <name type="common">VACV</name>
    <name type="synonym">Vaccinia virus (strain WR)</name>
    <dbReference type="NCBI Taxonomy" id="10254"/>
    <lineage>
        <taxon>Viruses</taxon>
        <taxon>Varidnaviria</taxon>
        <taxon>Bamfordvirae</taxon>
        <taxon>Nucleocytoviricota</taxon>
        <taxon>Pokkesviricetes</taxon>
        <taxon>Chitovirales</taxon>
        <taxon>Poxviridae</taxon>
        <taxon>Chordopoxvirinae</taxon>
        <taxon>Orthopoxvirus</taxon>
        <taxon>Vaccinia virus</taxon>
    </lineage>
</organism>
<reference key="1">
    <citation type="journal article" date="1991" name="J. Biol. Chem.">
        <title>Identification, sequence, and expression of the gene encoding a Mr 35,000 subunit of the vaccinia virus DNA-dependent RNA polymerase.</title>
        <authorList>
            <person name="Amegadzie B.Y."/>
            <person name="Ahn B.-Y."/>
            <person name="Moss B."/>
        </authorList>
    </citation>
    <scope>NUCLEOTIDE SEQUENCE [GENOMIC DNA]</scope>
</reference>
<reference key="2">
    <citation type="journal article" date="1991" name="J. Gen. Virol.">
        <title>Nucleotide sequence of 42 kbp of vaccinia virus strain WR from near the right inverted terminal repeat.</title>
        <authorList>
            <person name="Smith G.L."/>
            <person name="Chan Y.S."/>
            <person name="Howard S.T."/>
        </authorList>
    </citation>
    <scope>NUCLEOTIDE SEQUENCE [GENOMIC DNA]</scope>
</reference>
<reference key="3">
    <citation type="submission" date="2003-02" db="EMBL/GenBank/DDBJ databases">
        <title>Sequencing of the coding region of Vaccinia-WR to an average 9-fold redundancy and an error rate of 0.16/10kb.</title>
        <authorList>
            <person name="Esposito J.J."/>
            <person name="Frace A.M."/>
            <person name="Sammons S.A."/>
            <person name="Olsen-Rasmussen M."/>
            <person name="Osborne J."/>
            <person name="Wohlhueter R."/>
        </authorList>
    </citation>
    <scope>NUCLEOTIDE SEQUENCE [LARGE SCALE GENOMIC DNA]</scope>
</reference>
<reference key="4">
    <citation type="journal article" date="1999" name="J. Gen. Virol.">
        <title>The vaccinia virus A4OR gene product is a nonstructural, type II membrane glycoprotein that is expressed at the cell surface.</title>
        <authorList>
            <person name="Wilcock D."/>
            <person name="Duncan S.A."/>
            <person name="Traktman P."/>
            <person name="Zhang W.H."/>
            <person name="Smith G.L."/>
        </authorList>
    </citation>
    <scope>TOPOLOGY</scope>
    <scope>SUBCELLULAR LOCATION</scope>
</reference>
<proteinExistence type="evidence at protein level"/>